<name>GATB_BACC2</name>
<gene>
    <name evidence="1" type="primary">gatB</name>
    <name type="ordered locus">BCG9842_B4952</name>
</gene>
<reference key="1">
    <citation type="submission" date="2008-10" db="EMBL/GenBank/DDBJ databases">
        <title>Genome sequence of Bacillus cereus G9842.</title>
        <authorList>
            <person name="Dodson R.J."/>
            <person name="Durkin A.S."/>
            <person name="Rosovitz M.J."/>
            <person name="Rasko D.A."/>
            <person name="Hoffmaster A."/>
            <person name="Ravel J."/>
            <person name="Sutton G."/>
        </authorList>
    </citation>
    <scope>NUCLEOTIDE SEQUENCE [LARGE SCALE GENOMIC DNA]</scope>
    <source>
        <strain>G9842</strain>
    </source>
</reference>
<dbReference type="EC" id="6.3.5.-" evidence="1"/>
<dbReference type="EMBL" id="CP001186">
    <property type="protein sequence ID" value="ACK98036.1"/>
    <property type="molecule type" value="Genomic_DNA"/>
</dbReference>
<dbReference type="RefSeq" id="WP_001047684.1">
    <property type="nucleotide sequence ID" value="NC_011772.1"/>
</dbReference>
<dbReference type="SMR" id="B7IUY0"/>
<dbReference type="KEGG" id="bcg:BCG9842_B4952"/>
<dbReference type="HOGENOM" id="CLU_019240_0_0_9"/>
<dbReference type="Proteomes" id="UP000006744">
    <property type="component" value="Chromosome"/>
</dbReference>
<dbReference type="GO" id="GO:0050566">
    <property type="term" value="F:asparaginyl-tRNA synthase (glutamine-hydrolyzing) activity"/>
    <property type="evidence" value="ECO:0007669"/>
    <property type="project" value="RHEA"/>
</dbReference>
<dbReference type="GO" id="GO:0005524">
    <property type="term" value="F:ATP binding"/>
    <property type="evidence" value="ECO:0007669"/>
    <property type="project" value="UniProtKB-KW"/>
</dbReference>
<dbReference type="GO" id="GO:0050567">
    <property type="term" value="F:glutaminyl-tRNA synthase (glutamine-hydrolyzing) activity"/>
    <property type="evidence" value="ECO:0007669"/>
    <property type="project" value="UniProtKB-UniRule"/>
</dbReference>
<dbReference type="GO" id="GO:0070681">
    <property type="term" value="P:glutaminyl-tRNAGln biosynthesis via transamidation"/>
    <property type="evidence" value="ECO:0007669"/>
    <property type="project" value="TreeGrafter"/>
</dbReference>
<dbReference type="GO" id="GO:0006412">
    <property type="term" value="P:translation"/>
    <property type="evidence" value="ECO:0007669"/>
    <property type="project" value="UniProtKB-UniRule"/>
</dbReference>
<dbReference type="FunFam" id="1.10.10.410:FF:000001">
    <property type="entry name" value="Aspartyl/glutamyl-tRNA(Asn/Gln) amidotransferase subunit B"/>
    <property type="match status" value="1"/>
</dbReference>
<dbReference type="FunFam" id="1.10.150.380:FF:000001">
    <property type="entry name" value="Aspartyl/glutamyl-tRNA(Asn/Gln) amidotransferase subunit B"/>
    <property type="match status" value="1"/>
</dbReference>
<dbReference type="Gene3D" id="1.10.10.410">
    <property type="match status" value="1"/>
</dbReference>
<dbReference type="Gene3D" id="1.10.150.380">
    <property type="entry name" value="GatB domain, N-terminal subdomain"/>
    <property type="match status" value="1"/>
</dbReference>
<dbReference type="HAMAP" id="MF_00121">
    <property type="entry name" value="GatB"/>
    <property type="match status" value="1"/>
</dbReference>
<dbReference type="InterPro" id="IPR017959">
    <property type="entry name" value="Asn/Gln-tRNA_amidoTrfase_suB/E"/>
</dbReference>
<dbReference type="InterPro" id="IPR006075">
    <property type="entry name" value="Asn/Gln-tRNA_Trfase_suB/E_cat"/>
</dbReference>
<dbReference type="InterPro" id="IPR018027">
    <property type="entry name" value="Asn/Gln_amidotransferase"/>
</dbReference>
<dbReference type="InterPro" id="IPR003789">
    <property type="entry name" value="Asn/Gln_tRNA_amidoTrase-B-like"/>
</dbReference>
<dbReference type="InterPro" id="IPR004413">
    <property type="entry name" value="GatB"/>
</dbReference>
<dbReference type="InterPro" id="IPR042114">
    <property type="entry name" value="GatB_C_1"/>
</dbReference>
<dbReference type="InterPro" id="IPR023168">
    <property type="entry name" value="GatB_Yqey_C_2"/>
</dbReference>
<dbReference type="InterPro" id="IPR017958">
    <property type="entry name" value="Gln-tRNA_amidoTrfase_suB_CS"/>
</dbReference>
<dbReference type="InterPro" id="IPR014746">
    <property type="entry name" value="Gln_synth/guanido_kin_cat_dom"/>
</dbReference>
<dbReference type="NCBIfam" id="TIGR00133">
    <property type="entry name" value="gatB"/>
    <property type="match status" value="1"/>
</dbReference>
<dbReference type="NCBIfam" id="NF004011">
    <property type="entry name" value="PRK05477.1-1"/>
    <property type="match status" value="1"/>
</dbReference>
<dbReference type="NCBIfam" id="NF004012">
    <property type="entry name" value="PRK05477.1-2"/>
    <property type="match status" value="1"/>
</dbReference>
<dbReference type="NCBIfam" id="NF004014">
    <property type="entry name" value="PRK05477.1-4"/>
    <property type="match status" value="1"/>
</dbReference>
<dbReference type="PANTHER" id="PTHR11659">
    <property type="entry name" value="GLUTAMYL-TRNA GLN AMIDOTRANSFERASE SUBUNIT B MITOCHONDRIAL AND PROKARYOTIC PET112-RELATED"/>
    <property type="match status" value="1"/>
</dbReference>
<dbReference type="PANTHER" id="PTHR11659:SF0">
    <property type="entry name" value="GLUTAMYL-TRNA(GLN) AMIDOTRANSFERASE SUBUNIT B, MITOCHONDRIAL"/>
    <property type="match status" value="1"/>
</dbReference>
<dbReference type="Pfam" id="PF02934">
    <property type="entry name" value="GatB_N"/>
    <property type="match status" value="1"/>
</dbReference>
<dbReference type="Pfam" id="PF02637">
    <property type="entry name" value="GatB_Yqey"/>
    <property type="match status" value="1"/>
</dbReference>
<dbReference type="SMART" id="SM00845">
    <property type="entry name" value="GatB_Yqey"/>
    <property type="match status" value="1"/>
</dbReference>
<dbReference type="SUPFAM" id="SSF89095">
    <property type="entry name" value="GatB/YqeY motif"/>
    <property type="match status" value="1"/>
</dbReference>
<dbReference type="SUPFAM" id="SSF55931">
    <property type="entry name" value="Glutamine synthetase/guanido kinase"/>
    <property type="match status" value="1"/>
</dbReference>
<dbReference type="PROSITE" id="PS01234">
    <property type="entry name" value="GATB"/>
    <property type="match status" value="1"/>
</dbReference>
<organism>
    <name type="scientific">Bacillus cereus (strain G9842)</name>
    <dbReference type="NCBI Taxonomy" id="405531"/>
    <lineage>
        <taxon>Bacteria</taxon>
        <taxon>Bacillati</taxon>
        <taxon>Bacillota</taxon>
        <taxon>Bacilli</taxon>
        <taxon>Bacillales</taxon>
        <taxon>Bacillaceae</taxon>
        <taxon>Bacillus</taxon>
        <taxon>Bacillus cereus group</taxon>
    </lineage>
</organism>
<sequence length="475" mass="53166">MNLETIIGLEVHVELKTNSKIFSASPTEFGAEPNTQTSVIDLGYPGVLPTLNKEAVNFAMKAAMALNCEIATETKFDRKNYFYPDNPKAYQISQFDKPIGENGWIEIEVDGKKKRIGITRLHLEEDAGKSTHTADGSLVDYNRQGMPLIEIVSEPDMRTPEEAYAYLEKLKSIIQYTGVSDCKMEEGSLRCDANISLRPVGQEKFGTKAELKNLNSFTYVQKGLEHEQVRQEKELLSGGIIQQETRRYDEATKKTILMRVKEGSDDYRYFPEPDLVELYIDDEWKEAVRASIPELPDARKARYVAEIGLPAYDAHVLTLTKEMSDFFEATVADGADAKLTSNWLMGEVLAYLNKQQKELKDVALTPAGLSKMVQLIEKGTISSKIAKKVFNELIEKGGDPEEIVKAKGLVQISDEGTLRKVVTEILDNNGQSIEDFKNGKDRAIGFLVGQIMKATKGQANPPLVNKILLEEINKR</sequence>
<protein>
    <recommendedName>
        <fullName evidence="1">Aspartyl/glutamyl-tRNA(Asn/Gln) amidotransferase subunit B</fullName>
        <shortName evidence="1">Asp/Glu-ADT subunit B</shortName>
        <ecNumber evidence="1">6.3.5.-</ecNumber>
    </recommendedName>
</protein>
<evidence type="ECO:0000255" key="1">
    <source>
        <dbReference type="HAMAP-Rule" id="MF_00121"/>
    </source>
</evidence>
<keyword id="KW-0067">ATP-binding</keyword>
<keyword id="KW-0436">Ligase</keyword>
<keyword id="KW-0547">Nucleotide-binding</keyword>
<keyword id="KW-0648">Protein biosynthesis</keyword>
<proteinExistence type="inferred from homology"/>
<comment type="function">
    <text evidence="1">Allows the formation of correctly charged Asn-tRNA(Asn) or Gln-tRNA(Gln) through the transamidation of misacylated Asp-tRNA(Asn) or Glu-tRNA(Gln) in organisms which lack either or both of asparaginyl-tRNA or glutaminyl-tRNA synthetases. The reaction takes place in the presence of glutamine and ATP through an activated phospho-Asp-tRNA(Asn) or phospho-Glu-tRNA(Gln).</text>
</comment>
<comment type="catalytic activity">
    <reaction evidence="1">
        <text>L-glutamyl-tRNA(Gln) + L-glutamine + ATP + H2O = L-glutaminyl-tRNA(Gln) + L-glutamate + ADP + phosphate + H(+)</text>
        <dbReference type="Rhea" id="RHEA:17521"/>
        <dbReference type="Rhea" id="RHEA-COMP:9681"/>
        <dbReference type="Rhea" id="RHEA-COMP:9684"/>
        <dbReference type="ChEBI" id="CHEBI:15377"/>
        <dbReference type="ChEBI" id="CHEBI:15378"/>
        <dbReference type="ChEBI" id="CHEBI:29985"/>
        <dbReference type="ChEBI" id="CHEBI:30616"/>
        <dbReference type="ChEBI" id="CHEBI:43474"/>
        <dbReference type="ChEBI" id="CHEBI:58359"/>
        <dbReference type="ChEBI" id="CHEBI:78520"/>
        <dbReference type="ChEBI" id="CHEBI:78521"/>
        <dbReference type="ChEBI" id="CHEBI:456216"/>
    </reaction>
</comment>
<comment type="catalytic activity">
    <reaction evidence="1">
        <text>L-aspartyl-tRNA(Asn) + L-glutamine + ATP + H2O = L-asparaginyl-tRNA(Asn) + L-glutamate + ADP + phosphate + 2 H(+)</text>
        <dbReference type="Rhea" id="RHEA:14513"/>
        <dbReference type="Rhea" id="RHEA-COMP:9674"/>
        <dbReference type="Rhea" id="RHEA-COMP:9677"/>
        <dbReference type="ChEBI" id="CHEBI:15377"/>
        <dbReference type="ChEBI" id="CHEBI:15378"/>
        <dbReference type="ChEBI" id="CHEBI:29985"/>
        <dbReference type="ChEBI" id="CHEBI:30616"/>
        <dbReference type="ChEBI" id="CHEBI:43474"/>
        <dbReference type="ChEBI" id="CHEBI:58359"/>
        <dbReference type="ChEBI" id="CHEBI:78515"/>
        <dbReference type="ChEBI" id="CHEBI:78516"/>
        <dbReference type="ChEBI" id="CHEBI:456216"/>
    </reaction>
</comment>
<comment type="subunit">
    <text evidence="1">Heterotrimer of A, B and C subunits.</text>
</comment>
<comment type="similarity">
    <text evidence="1">Belongs to the GatB/GatE family. GatB subfamily.</text>
</comment>
<accession>B7IUY0</accession>
<feature type="chain" id="PRO_1000117612" description="Aspartyl/glutamyl-tRNA(Asn/Gln) amidotransferase subunit B">
    <location>
        <begin position="1"/>
        <end position="475"/>
    </location>
</feature>